<dbReference type="EMBL" id="AM177312">
    <property type="protein sequence ID" value="CAJ45566.1"/>
    <property type="molecule type" value="mRNA"/>
</dbReference>
<dbReference type="EMBL" id="AC000103">
    <property type="protein sequence ID" value="AAF97961.1"/>
    <property type="status" value="ALT_SEQ"/>
    <property type="molecule type" value="Genomic_DNA"/>
</dbReference>
<dbReference type="EMBL" id="CP002684">
    <property type="protein sequence ID" value="AEE30539.1"/>
    <property type="molecule type" value="Genomic_DNA"/>
</dbReference>
<dbReference type="PIR" id="H86378">
    <property type="entry name" value="H86378"/>
</dbReference>
<dbReference type="RefSeq" id="NP_173858.5">
    <molecule id="Q9FYL3-1"/>
    <property type="nucleotide sequence ID" value="NM_102294.7"/>
</dbReference>
<dbReference type="SMR" id="Q9FYL3"/>
<dbReference type="BioGRID" id="24303">
    <property type="interactions" value="5"/>
</dbReference>
<dbReference type="FunCoup" id="Q9FYL3">
    <property type="interactions" value="181"/>
</dbReference>
<dbReference type="IntAct" id="Q9FYL3">
    <property type="interactions" value="6"/>
</dbReference>
<dbReference type="STRING" id="3702.Q9FYL3"/>
<dbReference type="TCDB" id="2.A.9.2.2">
    <property type="family name" value="the membrane protein insertase (yidc/alb3/oxa1) family"/>
</dbReference>
<dbReference type="iPTMnet" id="Q9FYL3"/>
<dbReference type="PaxDb" id="3702-AT1G24490.1"/>
<dbReference type="ProteomicsDB" id="245037">
    <molecule id="Q9FYL3-1"/>
</dbReference>
<dbReference type="EnsemblPlants" id="AT1G24490.1">
    <molecule id="Q9FYL3-1"/>
    <property type="protein sequence ID" value="AT1G24490.1"/>
    <property type="gene ID" value="AT1G24490"/>
</dbReference>
<dbReference type="GeneID" id="839065"/>
<dbReference type="Gramene" id="AT1G24490.1">
    <molecule id="Q9FYL3-1"/>
    <property type="protein sequence ID" value="AT1G24490.1"/>
    <property type="gene ID" value="AT1G24490"/>
</dbReference>
<dbReference type="KEGG" id="ath:AT1G24490"/>
<dbReference type="Araport" id="AT1G24490"/>
<dbReference type="TAIR" id="AT1G24490">
    <property type="gene designation" value="ALB4"/>
</dbReference>
<dbReference type="eggNOG" id="KOG1239">
    <property type="taxonomic scope" value="Eukaryota"/>
</dbReference>
<dbReference type="HOGENOM" id="CLU_036138_7_1_1"/>
<dbReference type="InParanoid" id="Q9FYL3"/>
<dbReference type="OMA" id="LPCAPNI"/>
<dbReference type="PhylomeDB" id="Q9FYL3"/>
<dbReference type="PRO" id="PR:Q9FYL3"/>
<dbReference type="Proteomes" id="UP000006548">
    <property type="component" value="Chromosome 1"/>
</dbReference>
<dbReference type="ExpressionAtlas" id="Q9FYL3">
    <property type="expression patterns" value="baseline and differential"/>
</dbReference>
<dbReference type="GO" id="GO:0009507">
    <property type="term" value="C:chloroplast"/>
    <property type="evidence" value="ECO:0000314"/>
    <property type="project" value="TAIR"/>
</dbReference>
<dbReference type="GO" id="GO:0009535">
    <property type="term" value="C:chloroplast thylakoid membrane"/>
    <property type="evidence" value="ECO:0000314"/>
    <property type="project" value="TAIR"/>
</dbReference>
<dbReference type="GO" id="GO:0009579">
    <property type="term" value="C:thylakoid"/>
    <property type="evidence" value="ECO:0000314"/>
    <property type="project" value="TAIR"/>
</dbReference>
<dbReference type="GO" id="GO:0032977">
    <property type="term" value="F:membrane insertase activity"/>
    <property type="evidence" value="ECO:0007669"/>
    <property type="project" value="InterPro"/>
</dbReference>
<dbReference type="GO" id="GO:0009658">
    <property type="term" value="P:chloroplast organization"/>
    <property type="evidence" value="ECO:0000315"/>
    <property type="project" value="TAIR"/>
</dbReference>
<dbReference type="GO" id="GO:0072598">
    <property type="term" value="P:protein localization to chloroplast"/>
    <property type="evidence" value="ECO:0000316"/>
    <property type="project" value="TAIR"/>
</dbReference>
<dbReference type="CDD" id="cd20070">
    <property type="entry name" value="5TM_YidC_Alb3"/>
    <property type="match status" value="1"/>
</dbReference>
<dbReference type="InterPro" id="IPR001708">
    <property type="entry name" value="YidC/ALB3/OXA1/COX18"/>
</dbReference>
<dbReference type="InterPro" id="IPR028055">
    <property type="entry name" value="YidC/Oxa/ALB_C"/>
</dbReference>
<dbReference type="InterPro" id="IPR047196">
    <property type="entry name" value="YidC_ALB_C"/>
</dbReference>
<dbReference type="NCBIfam" id="TIGR03592">
    <property type="entry name" value="yidC_oxa1_cterm"/>
    <property type="match status" value="1"/>
</dbReference>
<dbReference type="PANTHER" id="PTHR12428:SF14">
    <property type="entry name" value="ALBINO3-LIKE PROTEIN 1, CHLOROPLASTIC"/>
    <property type="match status" value="1"/>
</dbReference>
<dbReference type="PANTHER" id="PTHR12428">
    <property type="entry name" value="OXA1"/>
    <property type="match status" value="1"/>
</dbReference>
<dbReference type="Pfam" id="PF02096">
    <property type="entry name" value="60KD_IMP"/>
    <property type="match status" value="1"/>
</dbReference>
<name>ALB4_ARATH</name>
<accession>Q9FYL3</accession>
<accession>Q1RPP7</accession>
<accession>Q9FYL4</accession>
<comment type="function">
    <text evidence="4 5 6">Required for the insertion of some light harvesting chlorophyll-binding proteins (LHCP) into the chloroplast thylakoid membrane. Plays a role in the accumulation of some cytochrome b6f components in the thylakoid membrane (PubMed:26265777). Required for the assembly and/or stability of the F(1)F(0) ATP synthase in chloroplast thylakoid membranes. Functions to stabilize or promote assembly of F(1) during its attachment to the membrane-embedded F(0) part (PubMed:19995738). Participates with STIC2 in thylakoid protein targeting. May function with a specific subset of thylakoidal proteins (PubMed:28684427).</text>
</comment>
<comment type="subunit">
    <text evidence="5 6">Homodimer (PubMed:28684427). Interacts with ALB3 (PubMed:26265777). Interacts with STIC2 (PubMed:28684427).</text>
</comment>
<comment type="interaction">
    <interactant intactId="EBI-16630560">
        <id>Q9FYL3</id>
    </interactant>
    <interactant intactId="EBI-1806831">
        <id>Q8LBP4</id>
        <label>ALB3</label>
    </interactant>
    <organismsDiffer>false</organismsDiffer>
    <experiments>6</experiments>
</comment>
<comment type="interaction">
    <interactant intactId="EBI-16630560">
        <id>Q9FYL3</id>
    </interactant>
    <interactant intactId="EBI-4428759">
        <id>O82230</id>
        <label>STIC2</label>
    </interactant>
    <organismsDiffer>false</organismsDiffer>
    <experiments>4</experiments>
</comment>
<comment type="subcellular location">
    <subcellularLocation>
        <location evidence="3 6">Plastid</location>
        <location evidence="3 6">Chloroplast thylakoid membrane</location>
        <topology evidence="1">Multi-pass membrane protein</topology>
    </subcellularLocation>
</comment>
<comment type="alternative products">
    <event type="alternative splicing"/>
    <isoform>
        <id>Q9FYL3-1</id>
        <name>1</name>
        <sequence type="displayed"/>
    </isoform>
    <text>A number of isoforms are produced. According to EST sequences.</text>
</comment>
<comment type="tissue specificity">
    <text evidence="3">Highly expressed in green tissues.</text>
</comment>
<comment type="disruption phenotype">
    <text evidence="6">No visible macroscopic phenotype under normal growth condtions. Increased number of plastoglobules (lipid bodies) in chloroplasts.</text>
</comment>
<comment type="similarity">
    <text evidence="10">Belongs to the OXA1/ALB3/YidC (TC 2.A.9.2) family.</text>
</comment>
<comment type="caution">
    <text evidence="11">Was originally thought to be the product of one gene (ARTEMIS) that in fact corresponds to two separate genes At1g24485 and At1g24490.</text>
</comment>
<comment type="sequence caution" evidence="10">
    <conflict type="erroneous gene model prediction">
        <sequence resource="EMBL-CDS" id="AAF97961"/>
    </conflict>
</comment>
<proteinExistence type="evidence at protein level"/>
<organism>
    <name type="scientific">Arabidopsis thaliana</name>
    <name type="common">Mouse-ear cress</name>
    <dbReference type="NCBI Taxonomy" id="3702"/>
    <lineage>
        <taxon>Eukaryota</taxon>
        <taxon>Viridiplantae</taxon>
        <taxon>Streptophyta</taxon>
        <taxon>Embryophyta</taxon>
        <taxon>Tracheophyta</taxon>
        <taxon>Spermatophyta</taxon>
        <taxon>Magnoliopsida</taxon>
        <taxon>eudicotyledons</taxon>
        <taxon>Gunneridae</taxon>
        <taxon>Pentapetalae</taxon>
        <taxon>rosids</taxon>
        <taxon>malvids</taxon>
        <taxon>Brassicales</taxon>
        <taxon>Brassicaceae</taxon>
        <taxon>Camelineae</taxon>
        <taxon>Arabidopsis</taxon>
    </lineage>
</organism>
<protein>
    <recommendedName>
        <fullName evidence="10">ALBINO3-like protein 1, chloroplastic</fullName>
    </recommendedName>
    <alternativeName>
        <fullName evidence="10">Arabidopsis thaliana envelope membrane integrase</fullName>
    </alternativeName>
    <alternativeName>
        <fullName evidence="10">Protein ALBINA 4</fullName>
        <shortName evidence="10">Ath4</shortName>
    </alternativeName>
    <alternativeName>
        <fullName evidence="7">Protein ARTEMIS</fullName>
    </alternativeName>
    <alternativeName>
        <fullName evidence="9">Suppressor of tic40 protein 1</fullName>
    </alternativeName>
</protein>
<feature type="transit peptide" description="Chloroplast" evidence="1">
    <location>
        <begin position="1"/>
        <end position="45"/>
    </location>
</feature>
<feature type="chain" id="PRO_0000020366" description="ALBINO3-like protein 1, chloroplastic">
    <location>
        <begin position="46"/>
        <end position="499"/>
    </location>
</feature>
<feature type="transmembrane region" description="Helical" evidence="1">
    <location>
        <begin position="115"/>
        <end position="135"/>
    </location>
</feature>
<feature type="transmembrane region" description="Helical" evidence="1">
    <location>
        <begin position="184"/>
        <end position="204"/>
    </location>
</feature>
<feature type="transmembrane region" description="Helical" evidence="1">
    <location>
        <begin position="263"/>
        <end position="283"/>
    </location>
</feature>
<feature type="transmembrane region" description="Helical" evidence="1">
    <location>
        <begin position="302"/>
        <end position="322"/>
    </location>
</feature>
<feature type="region of interest" description="Disordered" evidence="2">
    <location>
        <begin position="378"/>
        <end position="499"/>
    </location>
</feature>
<feature type="coiled-coil region" evidence="1">
    <location>
        <begin position="397"/>
        <end position="436"/>
    </location>
</feature>
<feature type="compositionally biased region" description="Basic and acidic residues" evidence="2">
    <location>
        <begin position="379"/>
        <end position="420"/>
    </location>
</feature>
<feature type="compositionally biased region" description="Basic and acidic residues" evidence="2">
    <location>
        <begin position="430"/>
        <end position="452"/>
    </location>
</feature>
<feature type="compositionally biased region" description="Basic and acidic residues" evidence="2">
    <location>
        <begin position="486"/>
        <end position="499"/>
    </location>
</feature>
<reference key="1">
    <citation type="journal article" date="2002" name="Proc. Natl. Acad. Sci. U.S.A.">
        <title>Cell and chloroplast division requires ARTEMIS.</title>
        <authorList>
            <person name="Fulgosi H."/>
            <person name="Gerdes L."/>
            <person name="Westphal S."/>
            <person name="Glockmann C."/>
            <person name="Soll J."/>
        </authorList>
    </citation>
    <scope>NUCLEOTIDE SEQUENCE [MRNA]</scope>
</reference>
<reference key="2">
    <citation type="journal article" date="2006" name="J. Biol. Chem.">
        <title>A second thylakoid membrane-localized Alb3/OxaI/YidC homologue is involved in proper chloroplast biogenesis in Arabidopsis thaliana.</title>
        <authorList>
            <person name="Gerdes L."/>
            <person name="Bals T."/>
            <person name="Klostermann E."/>
            <person name="Karl M."/>
            <person name="Philippar K."/>
            <person name="Huenken M."/>
            <person name="Soll J."/>
            <person name="Schuenemann D."/>
        </authorList>
    </citation>
    <scope>SEQUENCE REVISION</scope>
    <scope>TISSUE SPECIFICITY</scope>
    <scope>SUBCELLULAR LOCATION</scope>
</reference>
<reference key="3">
    <citation type="journal article" date="2000" name="Nature">
        <title>Sequence and analysis of chromosome 1 of the plant Arabidopsis thaliana.</title>
        <authorList>
            <person name="Theologis A."/>
            <person name="Ecker J.R."/>
            <person name="Palm C.J."/>
            <person name="Federspiel N.A."/>
            <person name="Kaul S."/>
            <person name="White O."/>
            <person name="Alonso J."/>
            <person name="Altafi H."/>
            <person name="Araujo R."/>
            <person name="Bowman C.L."/>
            <person name="Brooks S.Y."/>
            <person name="Buehler E."/>
            <person name="Chan A."/>
            <person name="Chao Q."/>
            <person name="Chen H."/>
            <person name="Cheuk R.F."/>
            <person name="Chin C.W."/>
            <person name="Chung M.K."/>
            <person name="Conn L."/>
            <person name="Conway A.B."/>
            <person name="Conway A.R."/>
            <person name="Creasy T.H."/>
            <person name="Dewar K."/>
            <person name="Dunn P."/>
            <person name="Etgu P."/>
            <person name="Feldblyum T.V."/>
            <person name="Feng J.-D."/>
            <person name="Fong B."/>
            <person name="Fujii C.Y."/>
            <person name="Gill J.E."/>
            <person name="Goldsmith A.D."/>
            <person name="Haas B."/>
            <person name="Hansen N.F."/>
            <person name="Hughes B."/>
            <person name="Huizar L."/>
            <person name="Hunter J.L."/>
            <person name="Jenkins J."/>
            <person name="Johnson-Hopson C."/>
            <person name="Khan S."/>
            <person name="Khaykin E."/>
            <person name="Kim C.J."/>
            <person name="Koo H.L."/>
            <person name="Kremenetskaia I."/>
            <person name="Kurtz D.B."/>
            <person name="Kwan A."/>
            <person name="Lam B."/>
            <person name="Langin-Hooper S."/>
            <person name="Lee A."/>
            <person name="Lee J.M."/>
            <person name="Lenz C.A."/>
            <person name="Li J.H."/>
            <person name="Li Y.-P."/>
            <person name="Lin X."/>
            <person name="Liu S.X."/>
            <person name="Liu Z.A."/>
            <person name="Luros J.S."/>
            <person name="Maiti R."/>
            <person name="Marziali A."/>
            <person name="Militscher J."/>
            <person name="Miranda M."/>
            <person name="Nguyen M."/>
            <person name="Nierman W.C."/>
            <person name="Osborne B.I."/>
            <person name="Pai G."/>
            <person name="Peterson J."/>
            <person name="Pham P.K."/>
            <person name="Rizzo M."/>
            <person name="Rooney T."/>
            <person name="Rowley D."/>
            <person name="Sakano H."/>
            <person name="Salzberg S.L."/>
            <person name="Schwartz J.R."/>
            <person name="Shinn P."/>
            <person name="Southwick A.M."/>
            <person name="Sun H."/>
            <person name="Tallon L.J."/>
            <person name="Tambunga G."/>
            <person name="Toriumi M.J."/>
            <person name="Town C.D."/>
            <person name="Utterback T."/>
            <person name="Van Aken S."/>
            <person name="Vaysberg M."/>
            <person name="Vysotskaia V.S."/>
            <person name="Walker M."/>
            <person name="Wu D."/>
            <person name="Yu G."/>
            <person name="Fraser C.M."/>
            <person name="Venter J.C."/>
            <person name="Davis R.W."/>
        </authorList>
    </citation>
    <scope>NUCLEOTIDE SEQUENCE [LARGE SCALE GENOMIC DNA]</scope>
    <source>
        <strain>cv. Columbia</strain>
    </source>
</reference>
<reference key="4">
    <citation type="journal article" date="2017" name="Plant J.">
        <title>Araport11: a complete reannotation of the Arabidopsis thaliana reference genome.</title>
        <authorList>
            <person name="Cheng C.Y."/>
            <person name="Krishnakumar V."/>
            <person name="Chan A.P."/>
            <person name="Thibaud-Nissen F."/>
            <person name="Schobel S."/>
            <person name="Town C.D."/>
        </authorList>
    </citation>
    <scope>GENOME REANNOTATION</scope>
    <source>
        <strain>cv. Columbia</strain>
    </source>
</reference>
<reference key="5">
    <citation type="journal article" date="2009" name="Mol. Plant">
        <title>Alb4 of Arabidopsis promotes assembly and stabilization of a non chlorophyll-binding photosynthetic complex, the CF1CF0-ATP synthase.</title>
        <authorList>
            <person name="Benz M."/>
            <person name="Bals T."/>
            <person name="Guegel I.L."/>
            <person name="Piotrowski M."/>
            <person name="Kuhn A."/>
            <person name="Schuenemann D."/>
            <person name="Soll J."/>
            <person name="Ankele E."/>
        </authorList>
    </citation>
    <scope>FUNCTION</scope>
</reference>
<reference key="6">
    <citation type="journal article" date="2015" name="Plant Physiol.">
        <title>Genetic and physical interaction studies reveal functional similarities between ALBINO3 and ALBINO4 in Arabidopsis.</title>
        <authorList>
            <person name="Troesch R."/>
            <person name="Toepel M."/>
            <person name="Flores-Perez U."/>
            <person name="Jarvis P."/>
        </authorList>
    </citation>
    <scope>FUNCTION</scope>
    <scope>INTERACTION WITH ALB3</scope>
</reference>
<reference key="7">
    <citation type="journal article" date="2017" name="Plant Cell">
        <title>Suppressors of the chloroplast protein import mutant tic40 reveal a genetic link between protein import and thylakoid biogenesis.</title>
        <authorList>
            <person name="Bedard J."/>
            <person name="Troesch R."/>
            <person name="Wu F."/>
            <person name="Ling Q."/>
            <person name="Flores-Perez U."/>
            <person name="Toepel M."/>
            <person name="Nawaz F."/>
            <person name="Jarvis P."/>
        </authorList>
    </citation>
    <scope>FUNCTION</scope>
    <scope>HOMODIMERIZATION</scope>
    <scope>INTERACTION WITH STIC2</scope>
    <scope>SUBCELLULAR LOCATION</scope>
    <scope>DISRUPTION PHENOTYPE</scope>
</reference>
<keyword id="KW-0025">Alternative splicing</keyword>
<keyword id="KW-0150">Chloroplast</keyword>
<keyword id="KW-0175">Coiled coil</keyword>
<keyword id="KW-0472">Membrane</keyword>
<keyword id="KW-0934">Plastid</keyword>
<keyword id="KW-1185">Reference proteome</keyword>
<keyword id="KW-0793">Thylakoid</keyword>
<keyword id="KW-0809">Transit peptide</keyword>
<keyword id="KW-0812">Transmembrane</keyword>
<keyword id="KW-1133">Transmembrane helix</keyword>
<sequence length="499" mass="55188">MSSTISLKPTHLILSSFSTGKVLQFRRSRFSHTPSSSSSRYRTLVAQLGFRPDSFDFIKDHAENLLYTIADAAVSSSETFESVAGTTTKTTQSNDWFSGIANYMETILKVLKDGLSTVHVPYSYGFAIILLTVLVKAATFPLTKKQVESAMAMKSLTPQIKAIQERYAGDQEKIQLETARLYKLAGINPLAGCLPTLATIPVWIGLYRALSNVADEGLLTEGFFWIPSLAGPTTVAARQNGSGISWLFPFIEGHPPLGWPDTLAYLVLPLLLVFSQYLSIQIMQSSQSNDPAMKSSQAVTKLLPLMIGYFALSVPSGLSLYWLTNNILSTAQQVWLQKYGGAKNPVEKFTNLVTKEDKTQQIEKSFSEPLVQKSVSELKIPREKGGEKVTPECPKPGERFRLLKEQEAKRRREKEERQKAEAALSNQNTDKAHEQDEKSDTAIVAEDDKKTELSAVDETSDGTVAVNGKPSIQKDETTNGTFGIGHDTEQQHSHETEKR</sequence>
<gene>
    <name evidence="8" type="primary">ALB4</name>
    <name evidence="14" type="synonym">ALB</name>
    <name evidence="10" type="synonym">ALB3L1</name>
    <name evidence="10" type="synonym">ART1</name>
    <name evidence="9" type="synonym">STIC1</name>
    <name evidence="12" type="ordered locus">At1g24490</name>
    <name evidence="13" type="ORF">F21J9.16</name>
    <name type="ORF">F21J9_170</name>
</gene>
<evidence type="ECO:0000255" key="1"/>
<evidence type="ECO:0000256" key="2">
    <source>
        <dbReference type="SAM" id="MobiDB-lite"/>
    </source>
</evidence>
<evidence type="ECO:0000269" key="3">
    <source>
    </source>
</evidence>
<evidence type="ECO:0000269" key="4">
    <source>
    </source>
</evidence>
<evidence type="ECO:0000269" key="5">
    <source>
    </source>
</evidence>
<evidence type="ECO:0000269" key="6">
    <source>
    </source>
</evidence>
<evidence type="ECO:0000303" key="7">
    <source>
    </source>
</evidence>
<evidence type="ECO:0000303" key="8">
    <source>
    </source>
</evidence>
<evidence type="ECO:0000303" key="9">
    <source>
    </source>
</evidence>
<evidence type="ECO:0000305" key="10"/>
<evidence type="ECO:0000305" key="11">
    <source>
    </source>
</evidence>
<evidence type="ECO:0000312" key="12">
    <source>
        <dbReference type="Araport" id="AT1G24490"/>
    </source>
</evidence>
<evidence type="ECO:0000312" key="13">
    <source>
        <dbReference type="EMBL" id="AAF97961.1"/>
    </source>
</evidence>
<evidence type="ECO:0000312" key="14">
    <source>
        <dbReference type="EMBL" id="CAJ45566.1"/>
    </source>
</evidence>